<evidence type="ECO:0000305" key="1"/>
<organism>
    <name type="scientific">Pyrococcus abyssi (strain GE5 / Orsay)</name>
    <dbReference type="NCBI Taxonomy" id="272844"/>
    <lineage>
        <taxon>Archaea</taxon>
        <taxon>Methanobacteriati</taxon>
        <taxon>Methanobacteriota</taxon>
        <taxon>Thermococci</taxon>
        <taxon>Thermococcales</taxon>
        <taxon>Thermococcaceae</taxon>
        <taxon>Pyrococcus</taxon>
    </lineage>
</organism>
<accession>Q9V1U2</accession>
<accession>G8ZHW9</accession>
<sequence length="68" mass="8165">MKPSEIREMSIEEIDAKIRELRLQLAKERGMLTMGTSLENPMVIRNLRRDIARLLTIKREKLREMRKK</sequence>
<reference key="1">
    <citation type="journal article" date="2003" name="Mol. Microbiol.">
        <title>An integrated analysis of the genome of the hyperthermophilic archaeon Pyrococcus abyssi.</title>
        <authorList>
            <person name="Cohen G.N."/>
            <person name="Barbe V."/>
            <person name="Flament D."/>
            <person name="Galperin M."/>
            <person name="Heilig R."/>
            <person name="Lecompte O."/>
            <person name="Poch O."/>
            <person name="Prieur D."/>
            <person name="Querellou J."/>
            <person name="Ripp R."/>
            <person name="Thierry J.-C."/>
            <person name="Van der Oost J."/>
            <person name="Weissenbach J."/>
            <person name="Zivanovic Y."/>
            <person name="Forterre P."/>
        </authorList>
    </citation>
    <scope>NUCLEOTIDE SEQUENCE [LARGE SCALE GENOMIC DNA]</scope>
    <source>
        <strain>GE5 / Orsay</strain>
    </source>
</reference>
<reference key="2">
    <citation type="journal article" date="2012" name="Curr. Microbiol.">
        <title>Re-annotation of two hyperthermophilic archaea Pyrococcus abyssi GE5 and Pyrococcus furiosus DSM 3638.</title>
        <authorList>
            <person name="Gao J."/>
            <person name="Wang J."/>
        </authorList>
    </citation>
    <scope>GENOME REANNOTATION</scope>
    <source>
        <strain>GE5 / Orsay</strain>
    </source>
</reference>
<comment type="similarity">
    <text evidence="1">Belongs to the universal ribosomal protein uL29 family.</text>
</comment>
<comment type="sequence caution" evidence="1">
    <conflict type="erroneous initiation">
        <sequence resource="EMBL-CDS" id="CAB49257"/>
    </conflict>
    <text>Truncated N-terminus.</text>
</comment>
<proteinExistence type="inferred from homology"/>
<gene>
    <name type="primary">rpl29</name>
    <name type="ordered locus">PYRAB03350</name>
    <name type="ORF">PAB8082</name>
</gene>
<keyword id="KW-0687">Ribonucleoprotein</keyword>
<keyword id="KW-0689">Ribosomal protein</keyword>
<feature type="chain" id="PRO_0000130518" description="Large ribosomal subunit protein uL29">
    <location>
        <begin position="1"/>
        <end position="68"/>
    </location>
</feature>
<name>RL29_PYRAB</name>
<dbReference type="EMBL" id="AJ248284">
    <property type="protein sequence ID" value="CAB49257.1"/>
    <property type="status" value="ALT_INIT"/>
    <property type="molecule type" value="Genomic_DNA"/>
</dbReference>
<dbReference type="EMBL" id="HE613800">
    <property type="protein sequence ID" value="CCE69712.1"/>
    <property type="molecule type" value="Genomic_DNA"/>
</dbReference>
<dbReference type="PIR" id="B75147">
    <property type="entry name" value="B75147"/>
</dbReference>
<dbReference type="SMR" id="Q9V1U2"/>
<dbReference type="STRING" id="272844.PAB8082"/>
<dbReference type="KEGG" id="pab:PAB8082"/>
<dbReference type="PATRIC" id="fig|272844.11.peg.356"/>
<dbReference type="eggNOG" id="arCOG00785">
    <property type="taxonomic scope" value="Archaea"/>
</dbReference>
<dbReference type="HOGENOM" id="CLU_158491_2_2_2"/>
<dbReference type="OrthoDB" id="11736at2157"/>
<dbReference type="PhylomeDB" id="Q9V1U2"/>
<dbReference type="Proteomes" id="UP000000810">
    <property type="component" value="Chromosome"/>
</dbReference>
<dbReference type="Proteomes" id="UP000009139">
    <property type="component" value="Chromosome"/>
</dbReference>
<dbReference type="GO" id="GO:1990904">
    <property type="term" value="C:ribonucleoprotein complex"/>
    <property type="evidence" value="ECO:0007669"/>
    <property type="project" value="UniProtKB-KW"/>
</dbReference>
<dbReference type="GO" id="GO:0005840">
    <property type="term" value="C:ribosome"/>
    <property type="evidence" value="ECO:0007669"/>
    <property type="project" value="UniProtKB-KW"/>
</dbReference>
<dbReference type="GO" id="GO:0003735">
    <property type="term" value="F:structural constituent of ribosome"/>
    <property type="evidence" value="ECO:0007669"/>
    <property type="project" value="InterPro"/>
</dbReference>
<dbReference type="GO" id="GO:0006412">
    <property type="term" value="P:translation"/>
    <property type="evidence" value="ECO:0007669"/>
    <property type="project" value="UniProtKB-UniRule"/>
</dbReference>
<dbReference type="CDD" id="cd00427">
    <property type="entry name" value="Ribosomal_L29_HIP"/>
    <property type="match status" value="1"/>
</dbReference>
<dbReference type="Gene3D" id="1.10.287.310">
    <property type="match status" value="1"/>
</dbReference>
<dbReference type="HAMAP" id="MF_00374">
    <property type="entry name" value="Ribosomal_uL29"/>
    <property type="match status" value="1"/>
</dbReference>
<dbReference type="InterPro" id="IPR001854">
    <property type="entry name" value="Ribosomal_uL29"/>
</dbReference>
<dbReference type="InterPro" id="IPR018254">
    <property type="entry name" value="Ribosomal_uL29_CS"/>
</dbReference>
<dbReference type="InterPro" id="IPR036049">
    <property type="entry name" value="Ribosomal_uL29_sf"/>
</dbReference>
<dbReference type="NCBIfam" id="TIGR00012">
    <property type="entry name" value="L29"/>
    <property type="match status" value="1"/>
</dbReference>
<dbReference type="Pfam" id="PF00831">
    <property type="entry name" value="Ribosomal_L29"/>
    <property type="match status" value="1"/>
</dbReference>
<dbReference type="SUPFAM" id="SSF46561">
    <property type="entry name" value="Ribosomal protein L29 (L29p)"/>
    <property type="match status" value="1"/>
</dbReference>
<dbReference type="PROSITE" id="PS00579">
    <property type="entry name" value="RIBOSOMAL_L29"/>
    <property type="match status" value="1"/>
</dbReference>
<protein>
    <recommendedName>
        <fullName evidence="1">Large ribosomal subunit protein uL29</fullName>
    </recommendedName>
    <alternativeName>
        <fullName>50S ribosomal protein L29</fullName>
    </alternativeName>
</protein>